<feature type="chain" id="PRO_0000312487" description="5-methylthioadenosine/S-adenosylhomocysteine deaminase">
    <location>
        <begin position="1"/>
        <end position="424"/>
    </location>
</feature>
<feature type="binding site" evidence="1">
    <location>
        <position position="60"/>
    </location>
    <ligand>
        <name>Zn(2+)</name>
        <dbReference type="ChEBI" id="CHEBI:29105"/>
    </ligand>
</feature>
<feature type="binding site" evidence="1">
    <location>
        <position position="62"/>
    </location>
    <ligand>
        <name>Zn(2+)</name>
        <dbReference type="ChEBI" id="CHEBI:29105"/>
    </ligand>
</feature>
<feature type="binding site" evidence="1">
    <location>
        <position position="89"/>
    </location>
    <ligand>
        <name>substrate</name>
    </ligand>
</feature>
<feature type="binding site" evidence="1">
    <location>
        <position position="181"/>
    </location>
    <ligand>
        <name>substrate</name>
    </ligand>
</feature>
<feature type="binding site" evidence="1">
    <location>
        <position position="208"/>
    </location>
    <ligand>
        <name>Zn(2+)</name>
        <dbReference type="ChEBI" id="CHEBI:29105"/>
    </ligand>
</feature>
<feature type="binding site" evidence="1">
    <location>
        <position position="211"/>
    </location>
    <ligand>
        <name>substrate</name>
    </ligand>
</feature>
<feature type="binding site" evidence="1">
    <location>
        <position position="296"/>
    </location>
    <ligand>
        <name>substrate</name>
    </ligand>
</feature>
<feature type="binding site" evidence="1">
    <location>
        <position position="296"/>
    </location>
    <ligand>
        <name>Zn(2+)</name>
        <dbReference type="ChEBI" id="CHEBI:29105"/>
    </ligand>
</feature>
<proteinExistence type="inferred from homology"/>
<protein>
    <recommendedName>
        <fullName evidence="1">5-methylthioadenosine/S-adenosylhomocysteine deaminase</fullName>
        <shortName evidence="1">MTA/SAH deaminase</shortName>
        <ecNumber evidence="1">3.5.4.28</ecNumber>
        <ecNumber evidence="1">3.5.4.31</ecNumber>
    </recommendedName>
</protein>
<keyword id="KW-0378">Hydrolase</keyword>
<keyword id="KW-0479">Metal-binding</keyword>
<keyword id="KW-1185">Reference proteome</keyword>
<keyword id="KW-0862">Zinc</keyword>
<accession>Q5JER0</accession>
<organism>
    <name type="scientific">Thermococcus kodakarensis (strain ATCC BAA-918 / JCM 12380 / KOD1)</name>
    <name type="common">Pyrococcus kodakaraensis (strain KOD1)</name>
    <dbReference type="NCBI Taxonomy" id="69014"/>
    <lineage>
        <taxon>Archaea</taxon>
        <taxon>Methanobacteriati</taxon>
        <taxon>Methanobacteriota</taxon>
        <taxon>Thermococci</taxon>
        <taxon>Thermococcales</taxon>
        <taxon>Thermococcaceae</taxon>
        <taxon>Thermococcus</taxon>
    </lineage>
</organism>
<sequence length="424" mass="46655">MSILIKNGHVIYGENLDVVRADVLIESNRIVSVERNINEAADTVIDATGRVVSPGFINLHTHSPMGLLRGLADDLPLMEWLQNHIWPREAKLTPEYVKVGAYLGALEMIRSGTTTFLDMYFHMDKVAEAVLDAGLRGYLSYGMIDLGDPDRTEKELKEALREMEAIEKLNSERVHFVFGPHAPYTCSIALLKEVRKLASEHNKLITIHVSETMAEIGQITERYGKSPVVLLDDIGFLGNDVIIAHGVWLDSRDIQILARHGVTVAHNPGSNMKLASGVMPLEKLLNAGVNIGLGTDGSASNNNLDMLEEMKLAALLHKVHNLDPTIADARTVFRMATQNGAKALRLNAGIIKEGYLADIAIINFNRPHLRPINDVISHLVYSANGNDVETTIVDGKILMLDGEVLTLDEEKVISEAEKVSEKLA</sequence>
<comment type="function">
    <text evidence="1">Catalyzes the deamination of 5-methylthioadenosine and S-adenosyl-L-homocysteine into 5-methylthioinosine and S-inosyl-L-homocysteine, respectively. Is also able to deaminate adenosine.</text>
</comment>
<comment type="catalytic activity">
    <reaction evidence="1">
        <text>S-adenosyl-L-homocysteine + H2O + H(+) = S-inosyl-L-homocysteine + NH4(+)</text>
        <dbReference type="Rhea" id="RHEA:20716"/>
        <dbReference type="ChEBI" id="CHEBI:15377"/>
        <dbReference type="ChEBI" id="CHEBI:15378"/>
        <dbReference type="ChEBI" id="CHEBI:28938"/>
        <dbReference type="ChEBI" id="CHEBI:57856"/>
        <dbReference type="ChEBI" id="CHEBI:57985"/>
        <dbReference type="EC" id="3.5.4.28"/>
    </reaction>
</comment>
<comment type="catalytic activity">
    <reaction evidence="1">
        <text>S-methyl-5'-thioadenosine + H2O + H(+) = S-methyl-5'-thioinosine + NH4(+)</text>
        <dbReference type="Rhea" id="RHEA:25025"/>
        <dbReference type="ChEBI" id="CHEBI:15377"/>
        <dbReference type="ChEBI" id="CHEBI:15378"/>
        <dbReference type="ChEBI" id="CHEBI:17509"/>
        <dbReference type="ChEBI" id="CHEBI:28938"/>
        <dbReference type="ChEBI" id="CHEBI:48595"/>
        <dbReference type="EC" id="3.5.4.31"/>
    </reaction>
</comment>
<comment type="cofactor">
    <cofactor evidence="1">
        <name>Zn(2+)</name>
        <dbReference type="ChEBI" id="CHEBI:29105"/>
    </cofactor>
    <text evidence="1">Binds 1 zinc ion per subunit.</text>
</comment>
<comment type="similarity">
    <text evidence="1">Belongs to the metallo-dependent hydrolases superfamily. MTA/SAH deaminase family.</text>
</comment>
<name>MTAD_THEKO</name>
<dbReference type="EC" id="3.5.4.28" evidence="1"/>
<dbReference type="EC" id="3.5.4.31" evidence="1"/>
<dbReference type="EMBL" id="AP006878">
    <property type="protein sequence ID" value="BAD86080.1"/>
    <property type="molecule type" value="Genomic_DNA"/>
</dbReference>
<dbReference type="RefSeq" id="WP_011250842.1">
    <property type="nucleotide sequence ID" value="NC_006624.1"/>
</dbReference>
<dbReference type="SMR" id="Q5JER0"/>
<dbReference type="FunCoup" id="Q5JER0">
    <property type="interactions" value="22"/>
</dbReference>
<dbReference type="STRING" id="69014.TK1891"/>
<dbReference type="EnsemblBacteria" id="BAD86080">
    <property type="protein sequence ID" value="BAD86080"/>
    <property type="gene ID" value="TK1891"/>
</dbReference>
<dbReference type="GeneID" id="78448422"/>
<dbReference type="KEGG" id="tko:TK1891"/>
<dbReference type="PATRIC" id="fig|69014.16.peg.1849"/>
<dbReference type="eggNOG" id="arCOG00695">
    <property type="taxonomic scope" value="Archaea"/>
</dbReference>
<dbReference type="HOGENOM" id="CLU_012358_2_1_2"/>
<dbReference type="InParanoid" id="Q5JER0"/>
<dbReference type="OrthoDB" id="372084at2157"/>
<dbReference type="PhylomeDB" id="Q5JER0"/>
<dbReference type="Proteomes" id="UP000000536">
    <property type="component" value="Chromosome"/>
</dbReference>
<dbReference type="GO" id="GO:0090614">
    <property type="term" value="F:5'-methylthioadenosine deaminase activity"/>
    <property type="evidence" value="ECO:0007669"/>
    <property type="project" value="UniProtKB-UniRule"/>
</dbReference>
<dbReference type="GO" id="GO:0046872">
    <property type="term" value="F:metal ion binding"/>
    <property type="evidence" value="ECO:0007669"/>
    <property type="project" value="UniProtKB-KW"/>
</dbReference>
<dbReference type="GO" id="GO:0050270">
    <property type="term" value="F:S-adenosylhomocysteine deaminase activity"/>
    <property type="evidence" value="ECO:0007669"/>
    <property type="project" value="UniProtKB-UniRule"/>
</dbReference>
<dbReference type="CDD" id="cd01298">
    <property type="entry name" value="ATZ_TRZ_like"/>
    <property type="match status" value="1"/>
</dbReference>
<dbReference type="FunFam" id="3.20.20.140:FF:000014">
    <property type="entry name" value="5-methylthioadenosine/S-adenosylhomocysteine deaminase"/>
    <property type="match status" value="1"/>
</dbReference>
<dbReference type="Gene3D" id="3.20.20.140">
    <property type="entry name" value="Metal-dependent hydrolases"/>
    <property type="match status" value="1"/>
</dbReference>
<dbReference type="Gene3D" id="2.30.40.10">
    <property type="entry name" value="Urease, subunit C, domain 1"/>
    <property type="match status" value="1"/>
</dbReference>
<dbReference type="HAMAP" id="MF_01281">
    <property type="entry name" value="MTA_SAH_deamin"/>
    <property type="match status" value="1"/>
</dbReference>
<dbReference type="InterPro" id="IPR006680">
    <property type="entry name" value="Amidohydro-rel"/>
</dbReference>
<dbReference type="InterPro" id="IPR023512">
    <property type="entry name" value="Deaminase_MtaD/DadD"/>
</dbReference>
<dbReference type="InterPro" id="IPR011059">
    <property type="entry name" value="Metal-dep_hydrolase_composite"/>
</dbReference>
<dbReference type="InterPro" id="IPR032466">
    <property type="entry name" value="Metal_Hydrolase"/>
</dbReference>
<dbReference type="InterPro" id="IPR050287">
    <property type="entry name" value="MTA/SAH_deaminase"/>
</dbReference>
<dbReference type="NCBIfam" id="NF006252">
    <property type="entry name" value="PRK08393.1"/>
    <property type="match status" value="1"/>
</dbReference>
<dbReference type="PANTHER" id="PTHR43794:SF11">
    <property type="entry name" value="AMIDOHYDROLASE-RELATED DOMAIN-CONTAINING PROTEIN"/>
    <property type="match status" value="1"/>
</dbReference>
<dbReference type="PANTHER" id="PTHR43794">
    <property type="entry name" value="AMINOHYDROLASE SSNA-RELATED"/>
    <property type="match status" value="1"/>
</dbReference>
<dbReference type="Pfam" id="PF01979">
    <property type="entry name" value="Amidohydro_1"/>
    <property type="match status" value="1"/>
</dbReference>
<dbReference type="SUPFAM" id="SSF51338">
    <property type="entry name" value="Composite domain of metallo-dependent hydrolases"/>
    <property type="match status" value="1"/>
</dbReference>
<dbReference type="SUPFAM" id="SSF51556">
    <property type="entry name" value="Metallo-dependent hydrolases"/>
    <property type="match status" value="1"/>
</dbReference>
<reference key="1">
    <citation type="journal article" date="2005" name="Genome Res.">
        <title>Complete genome sequence of the hyperthermophilic archaeon Thermococcus kodakaraensis KOD1 and comparison with Pyrococcus genomes.</title>
        <authorList>
            <person name="Fukui T."/>
            <person name="Atomi H."/>
            <person name="Kanai T."/>
            <person name="Matsumi R."/>
            <person name="Fujiwara S."/>
            <person name="Imanaka T."/>
        </authorList>
    </citation>
    <scope>NUCLEOTIDE SEQUENCE [LARGE SCALE GENOMIC DNA]</scope>
    <source>
        <strain>ATCC BAA-918 / JCM 12380 / KOD1</strain>
    </source>
</reference>
<gene>
    <name evidence="1" type="primary">mtaD</name>
    <name type="ordered locus">TK1891</name>
</gene>
<evidence type="ECO:0000255" key="1">
    <source>
        <dbReference type="HAMAP-Rule" id="MF_01281"/>
    </source>
</evidence>